<gene>
    <name evidence="1" type="primary">gcvPB</name>
    <name type="ordered locus">BCQ_4010</name>
</gene>
<name>GCSPB_BACCQ</name>
<reference key="1">
    <citation type="journal article" date="2009" name="J. Bacteriol.">
        <title>Complete genome sequence of the extremophilic Bacillus cereus strain Q1 with industrial applications.</title>
        <authorList>
            <person name="Xiong Z."/>
            <person name="Jiang Y."/>
            <person name="Qi D."/>
            <person name="Lu H."/>
            <person name="Yang F."/>
            <person name="Yang J."/>
            <person name="Chen L."/>
            <person name="Sun L."/>
            <person name="Xu X."/>
            <person name="Xue Y."/>
            <person name="Zhu Y."/>
            <person name="Jin Q."/>
        </authorList>
    </citation>
    <scope>NUCLEOTIDE SEQUENCE [LARGE SCALE GENOMIC DNA]</scope>
    <source>
        <strain>Q1</strain>
    </source>
</reference>
<sequence length="491" mass="54923">MKNQDQALIFEVSKEGRIGYSLPKLDVEEVKLEDVFESDYIRVEDAELPEVSELDIMRHYTALSNRNHGVDSGFYPLGSCTMKYNPKINESVARFAGFANIHPLQDEKTVQGAMELMYDLQEHLIEITGMDTVTLQPAAGAHGEWTGLMLIRAYHEANGDFNRTKVIVPDSAHGTNPASATVAGFETITVKSNEHGLVDLEDLKRVVNEETAALMLTNPNTLGLFEENILEMAEIVHNAGGKLYYDGANLNAVLSQARPGDMGFDVVHLNLHKTFTGPHGGGGPGSGPVGVKADLIPYLPKPILEKTENGYHFNYDRPEAIGRVKPFYGNFGINVRAYTYIRSMGPDGLRAVTEYAVLNANYMMRRLAPFYDLPFDRHCKHEFVLSGRRQKKLGVRTLDIAKRLLDFGYHPPTIYFPLNVEECIMIEPTETESKETLDGFIDKMIQIAKEVEENPEVVQEAPHTTVIKRLDETMAARKPVLRYEKPAPVQV</sequence>
<dbReference type="EC" id="1.4.4.2" evidence="1"/>
<dbReference type="EMBL" id="CP000227">
    <property type="protein sequence ID" value="ACM14438.1"/>
    <property type="molecule type" value="Genomic_DNA"/>
</dbReference>
<dbReference type="SMR" id="B9IXL7"/>
<dbReference type="KEGG" id="bcq:BCQ_4010"/>
<dbReference type="HOGENOM" id="CLU_004620_5_0_9"/>
<dbReference type="Proteomes" id="UP000000441">
    <property type="component" value="Chromosome"/>
</dbReference>
<dbReference type="GO" id="GO:0005829">
    <property type="term" value="C:cytosol"/>
    <property type="evidence" value="ECO:0007669"/>
    <property type="project" value="TreeGrafter"/>
</dbReference>
<dbReference type="GO" id="GO:0005960">
    <property type="term" value="C:glycine cleavage complex"/>
    <property type="evidence" value="ECO:0007669"/>
    <property type="project" value="TreeGrafter"/>
</dbReference>
<dbReference type="GO" id="GO:0016594">
    <property type="term" value="F:glycine binding"/>
    <property type="evidence" value="ECO:0007669"/>
    <property type="project" value="TreeGrafter"/>
</dbReference>
<dbReference type="GO" id="GO:0004375">
    <property type="term" value="F:glycine dehydrogenase (decarboxylating) activity"/>
    <property type="evidence" value="ECO:0007669"/>
    <property type="project" value="UniProtKB-EC"/>
</dbReference>
<dbReference type="GO" id="GO:0030170">
    <property type="term" value="F:pyridoxal phosphate binding"/>
    <property type="evidence" value="ECO:0007669"/>
    <property type="project" value="TreeGrafter"/>
</dbReference>
<dbReference type="GO" id="GO:0019464">
    <property type="term" value="P:glycine decarboxylation via glycine cleavage system"/>
    <property type="evidence" value="ECO:0007669"/>
    <property type="project" value="UniProtKB-UniRule"/>
</dbReference>
<dbReference type="CDD" id="cd00613">
    <property type="entry name" value="GDC-P"/>
    <property type="match status" value="1"/>
</dbReference>
<dbReference type="FunFam" id="3.40.640.10:FF:000034">
    <property type="entry name" value="Probable glycine dehydrogenase (decarboxylating) subunit 2"/>
    <property type="match status" value="1"/>
</dbReference>
<dbReference type="FunFam" id="3.90.1150.10:FF:000014">
    <property type="entry name" value="Probable glycine dehydrogenase (decarboxylating) subunit 2"/>
    <property type="match status" value="1"/>
</dbReference>
<dbReference type="Gene3D" id="6.20.440.10">
    <property type="match status" value="1"/>
</dbReference>
<dbReference type="Gene3D" id="3.90.1150.10">
    <property type="entry name" value="Aspartate Aminotransferase, domain 1"/>
    <property type="match status" value="1"/>
</dbReference>
<dbReference type="Gene3D" id="3.40.640.10">
    <property type="entry name" value="Type I PLP-dependent aspartate aminotransferase-like (Major domain)"/>
    <property type="match status" value="1"/>
</dbReference>
<dbReference type="HAMAP" id="MF_00713">
    <property type="entry name" value="GcvPB"/>
    <property type="match status" value="1"/>
</dbReference>
<dbReference type="InterPro" id="IPR023012">
    <property type="entry name" value="GcvPB"/>
</dbReference>
<dbReference type="InterPro" id="IPR049316">
    <property type="entry name" value="GDC-P_C"/>
</dbReference>
<dbReference type="InterPro" id="IPR049315">
    <property type="entry name" value="GDC-P_N"/>
</dbReference>
<dbReference type="InterPro" id="IPR020581">
    <property type="entry name" value="GDC_P"/>
</dbReference>
<dbReference type="InterPro" id="IPR015424">
    <property type="entry name" value="PyrdxlP-dep_Trfase"/>
</dbReference>
<dbReference type="InterPro" id="IPR015421">
    <property type="entry name" value="PyrdxlP-dep_Trfase_major"/>
</dbReference>
<dbReference type="InterPro" id="IPR015422">
    <property type="entry name" value="PyrdxlP-dep_Trfase_small"/>
</dbReference>
<dbReference type="NCBIfam" id="NF003346">
    <property type="entry name" value="PRK04366.1"/>
    <property type="match status" value="1"/>
</dbReference>
<dbReference type="PANTHER" id="PTHR11773:SF1">
    <property type="entry name" value="GLYCINE DEHYDROGENASE (DECARBOXYLATING), MITOCHONDRIAL"/>
    <property type="match status" value="1"/>
</dbReference>
<dbReference type="PANTHER" id="PTHR11773">
    <property type="entry name" value="GLYCINE DEHYDROGENASE, DECARBOXYLATING"/>
    <property type="match status" value="1"/>
</dbReference>
<dbReference type="Pfam" id="PF21478">
    <property type="entry name" value="GcvP2_C"/>
    <property type="match status" value="1"/>
</dbReference>
<dbReference type="Pfam" id="PF02347">
    <property type="entry name" value="GDC-P"/>
    <property type="match status" value="1"/>
</dbReference>
<dbReference type="SUPFAM" id="SSF53383">
    <property type="entry name" value="PLP-dependent transferases"/>
    <property type="match status" value="1"/>
</dbReference>
<accession>B9IXL7</accession>
<protein>
    <recommendedName>
        <fullName evidence="1">Probable glycine dehydrogenase (decarboxylating) subunit 2</fullName>
        <ecNumber evidence="1">1.4.4.2</ecNumber>
    </recommendedName>
    <alternativeName>
        <fullName evidence="1">Glycine cleavage system P-protein subunit 2</fullName>
    </alternativeName>
    <alternativeName>
        <fullName evidence="1">Glycine decarboxylase subunit 2</fullName>
    </alternativeName>
    <alternativeName>
        <fullName evidence="1">Glycine dehydrogenase (aminomethyl-transferring) subunit 2</fullName>
    </alternativeName>
</protein>
<feature type="chain" id="PRO_1000147998" description="Probable glycine dehydrogenase (decarboxylating) subunit 2">
    <location>
        <begin position="1"/>
        <end position="491"/>
    </location>
</feature>
<feature type="modified residue" description="N6-(pyridoxal phosphate)lysine" evidence="1">
    <location>
        <position position="273"/>
    </location>
</feature>
<comment type="function">
    <text evidence="1">The glycine cleavage system catalyzes the degradation of glycine. The P protein binds the alpha-amino group of glycine through its pyridoxal phosphate cofactor; CO(2) is released and the remaining methylamine moiety is then transferred to the lipoamide cofactor of the H protein.</text>
</comment>
<comment type="catalytic activity">
    <reaction evidence="1">
        <text>N(6)-[(R)-lipoyl]-L-lysyl-[glycine-cleavage complex H protein] + glycine + H(+) = N(6)-[(R)-S(8)-aminomethyldihydrolipoyl]-L-lysyl-[glycine-cleavage complex H protein] + CO2</text>
        <dbReference type="Rhea" id="RHEA:24304"/>
        <dbReference type="Rhea" id="RHEA-COMP:10494"/>
        <dbReference type="Rhea" id="RHEA-COMP:10495"/>
        <dbReference type="ChEBI" id="CHEBI:15378"/>
        <dbReference type="ChEBI" id="CHEBI:16526"/>
        <dbReference type="ChEBI" id="CHEBI:57305"/>
        <dbReference type="ChEBI" id="CHEBI:83099"/>
        <dbReference type="ChEBI" id="CHEBI:83143"/>
        <dbReference type="EC" id="1.4.4.2"/>
    </reaction>
</comment>
<comment type="cofactor">
    <cofactor evidence="1">
        <name>pyridoxal 5'-phosphate</name>
        <dbReference type="ChEBI" id="CHEBI:597326"/>
    </cofactor>
</comment>
<comment type="subunit">
    <text evidence="1">The glycine cleavage system is composed of four proteins: P, T, L and H. In this organism, the P 'protein' is a heterodimer of two subunits.</text>
</comment>
<comment type="similarity">
    <text evidence="1">Belongs to the GcvP family. C-terminal subunit subfamily.</text>
</comment>
<evidence type="ECO:0000255" key="1">
    <source>
        <dbReference type="HAMAP-Rule" id="MF_00713"/>
    </source>
</evidence>
<organism>
    <name type="scientific">Bacillus cereus (strain Q1)</name>
    <dbReference type="NCBI Taxonomy" id="361100"/>
    <lineage>
        <taxon>Bacteria</taxon>
        <taxon>Bacillati</taxon>
        <taxon>Bacillota</taxon>
        <taxon>Bacilli</taxon>
        <taxon>Bacillales</taxon>
        <taxon>Bacillaceae</taxon>
        <taxon>Bacillus</taxon>
        <taxon>Bacillus cereus group</taxon>
    </lineage>
</organism>
<keyword id="KW-0560">Oxidoreductase</keyword>
<keyword id="KW-0663">Pyridoxal phosphate</keyword>
<proteinExistence type="inferred from homology"/>